<feature type="chain" id="PRO_0000370429" description="Ribosome biogenesis protein ERB1">
    <location>
        <begin position="1"/>
        <end position="811"/>
    </location>
</feature>
<feature type="repeat" description="WD 1">
    <location>
        <begin position="438"/>
        <end position="477"/>
    </location>
</feature>
<feature type="repeat" description="WD 2">
    <location>
        <begin position="485"/>
        <end position="525"/>
    </location>
</feature>
<feature type="repeat" description="WD 3">
    <location>
        <begin position="595"/>
        <end position="637"/>
    </location>
</feature>
<feature type="repeat" description="WD 4">
    <location>
        <begin position="640"/>
        <end position="678"/>
    </location>
</feature>
<feature type="repeat" description="WD 5">
    <location>
        <begin position="681"/>
        <end position="720"/>
    </location>
</feature>
<feature type="repeat" description="WD 6">
    <location>
        <begin position="724"/>
        <end position="764"/>
    </location>
</feature>
<feature type="repeat" description="WD 7">
    <location>
        <begin position="780"/>
        <end position="811"/>
    </location>
</feature>
<feature type="region of interest" description="Disordered" evidence="3">
    <location>
        <begin position="1"/>
        <end position="138"/>
    </location>
</feature>
<feature type="region of interest" description="Required for interaction with NOP7" evidence="1">
    <location>
        <begin position="270"/>
        <end position="386"/>
    </location>
</feature>
<feature type="region of interest" description="Required for interaction with YTM1" evidence="1">
    <location>
        <begin position="386"/>
        <end position="422"/>
    </location>
</feature>
<feature type="region of interest" description="Disordered" evidence="3">
    <location>
        <begin position="547"/>
        <end position="566"/>
    </location>
</feature>
<feature type="compositionally biased region" description="Polar residues" evidence="3">
    <location>
        <begin position="1"/>
        <end position="11"/>
    </location>
</feature>
<feature type="compositionally biased region" description="Acidic residues" evidence="3">
    <location>
        <begin position="27"/>
        <end position="96"/>
    </location>
</feature>
<feature type="compositionally biased region" description="Polar residues" evidence="3">
    <location>
        <begin position="104"/>
        <end position="121"/>
    </location>
</feature>
<feature type="compositionally biased region" description="Basic and acidic residues" evidence="3">
    <location>
        <begin position="128"/>
        <end position="138"/>
    </location>
</feature>
<proteinExistence type="inferred from homology"/>
<keyword id="KW-0539">Nucleus</keyword>
<keyword id="KW-1185">Reference proteome</keyword>
<keyword id="KW-0677">Repeat</keyword>
<keyword id="KW-0690">Ribosome biogenesis</keyword>
<keyword id="KW-0698">rRNA processing</keyword>
<keyword id="KW-0853">WD repeat</keyword>
<accession>Q6BRG6</accession>
<reference key="1">
    <citation type="journal article" date="2004" name="Nature">
        <title>Genome evolution in yeasts.</title>
        <authorList>
            <person name="Dujon B."/>
            <person name="Sherman D."/>
            <person name="Fischer G."/>
            <person name="Durrens P."/>
            <person name="Casaregola S."/>
            <person name="Lafontaine I."/>
            <person name="de Montigny J."/>
            <person name="Marck C."/>
            <person name="Neuveglise C."/>
            <person name="Talla E."/>
            <person name="Goffard N."/>
            <person name="Frangeul L."/>
            <person name="Aigle M."/>
            <person name="Anthouard V."/>
            <person name="Babour A."/>
            <person name="Barbe V."/>
            <person name="Barnay S."/>
            <person name="Blanchin S."/>
            <person name="Beckerich J.-M."/>
            <person name="Beyne E."/>
            <person name="Bleykasten C."/>
            <person name="Boisrame A."/>
            <person name="Boyer J."/>
            <person name="Cattolico L."/>
            <person name="Confanioleri F."/>
            <person name="de Daruvar A."/>
            <person name="Despons L."/>
            <person name="Fabre E."/>
            <person name="Fairhead C."/>
            <person name="Ferry-Dumazet H."/>
            <person name="Groppi A."/>
            <person name="Hantraye F."/>
            <person name="Hennequin C."/>
            <person name="Jauniaux N."/>
            <person name="Joyet P."/>
            <person name="Kachouri R."/>
            <person name="Kerrest A."/>
            <person name="Koszul R."/>
            <person name="Lemaire M."/>
            <person name="Lesur I."/>
            <person name="Ma L."/>
            <person name="Muller H."/>
            <person name="Nicaud J.-M."/>
            <person name="Nikolski M."/>
            <person name="Oztas S."/>
            <person name="Ozier-Kalogeropoulos O."/>
            <person name="Pellenz S."/>
            <person name="Potier S."/>
            <person name="Richard G.-F."/>
            <person name="Straub M.-L."/>
            <person name="Suleau A."/>
            <person name="Swennen D."/>
            <person name="Tekaia F."/>
            <person name="Wesolowski-Louvel M."/>
            <person name="Westhof E."/>
            <person name="Wirth B."/>
            <person name="Zeniou-Meyer M."/>
            <person name="Zivanovic Y."/>
            <person name="Bolotin-Fukuhara M."/>
            <person name="Thierry A."/>
            <person name="Bouchier C."/>
            <person name="Caudron B."/>
            <person name="Scarpelli C."/>
            <person name="Gaillardin C."/>
            <person name="Weissenbach J."/>
            <person name="Wincker P."/>
            <person name="Souciet J.-L."/>
        </authorList>
    </citation>
    <scope>NUCLEOTIDE SEQUENCE [LARGE SCALE GENOMIC DNA]</scope>
    <source>
        <strain>ATCC 36239 / CBS 767 / BCRC 21394 / JCM 1990 / NBRC 0083 / IGC 2968</strain>
    </source>
</reference>
<name>ERB1_DEBHA</name>
<protein>
    <recommendedName>
        <fullName evidence="2">Ribosome biogenesis protein ERB1</fullName>
    </recommendedName>
    <alternativeName>
        <fullName evidence="2">Eukaryotic ribosome biogenesis protein 1</fullName>
    </alternativeName>
</protein>
<comment type="function">
    <text evidence="2">Component of the NOP7 complex, which is required for maturation of the 25S and 5.8S ribosomal RNAs and formation of the 60S ribosome.</text>
</comment>
<comment type="subunit">
    <text evidence="2">Component of the NOP7 complex, composed of ERB1, NOP7 and YTM1. The complex is held together by ERB1, which interacts with NOP7 via its N-terminal domain and with YTM1 via a high-affinity interaction between the seven-bladed beta-propeller domains of the 2 proteins. The NOP7 complex associates with the 66S pre-ribosome.</text>
</comment>
<comment type="subcellular location">
    <subcellularLocation>
        <location evidence="2">Nucleus</location>
        <location evidence="2">Nucleolus</location>
    </subcellularLocation>
    <subcellularLocation>
        <location evidence="2">Nucleus</location>
        <location evidence="2">Nucleoplasm</location>
    </subcellularLocation>
</comment>
<comment type="similarity">
    <text evidence="2">Belongs to the WD repeat BOP1/ERB1 family.</text>
</comment>
<sequence length="811" mass="92524">MARNSKATDTPKTVVEKQSRKRKQDVEDAEESSSDEELQVEGILDDAASEDEESDSEDADKEDDEEEELEGDSDEEFNELLGEEEDLSDVDSEEFSDEPRDETASITDKLSGTKIRSYSNATEDEENEVHTKFSDGRPRIIKPEINPIYDSDDSDNENFNTIGNIPLSAYEEMPHIGYDINGKRIMRPAKGSALDQLLESIDLPEGWTGLFDQNTGTSLKITDDELELIRKIQAQESTDENINPYEPTIEWFTSKTEVMPLTAVPEPKRRFVPSKHEAKKVMKIVRAIREGRIVPPNKVKEQQEEEKYNFDLWNDNESETKDHIMNLRAPKLPPPTNEESYNPPEEYLMDEEEKKKWLEMEPEDRDKNYIPQKYNSLRKVPGYQEGLRERFERCLDLYLAPRTRHNKLNIDPDSLIPELPSPKDLRPFPIRCSTIFQGHTEKIRTLSISPDGLWLATGSDDGSVRIWEILTGRQVYKTVLVADDNTDDNIESLEWNPDSNSGILAAIAGEHIYLIVPPIFGFDIENNGRLRIESGWGYDTFGNKSKTKNSNIKVNSDDEDEEVEKADTNTGKKDVCKWFTPNTEQSQAGISAIIQCRKTVKKISWHRKGDYFVTVSPDSGHSSVLIHQLSKHLSQSPFKKSKGIIMDAKFHPFKPQLFVASQRYIRIYDLAQQVLVKKLMPGARWLSNIDIHPRGDNLLASSYDKRVLWHDLDLSSTPYKTLRYHDKAVRSIKFHKANLPLFASASDDGSIHVFHGTVYDDLMTNPLLVPLKKLTGHKIINSLGVLDLVWHPKEAWLFSAGADGTARLWTT</sequence>
<dbReference type="EMBL" id="CR382136">
    <property type="protein sequence ID" value="CAG87375.2"/>
    <property type="molecule type" value="Genomic_DNA"/>
</dbReference>
<dbReference type="RefSeq" id="XP_459204.2">
    <property type="nucleotide sequence ID" value="XM_459204.1"/>
</dbReference>
<dbReference type="SMR" id="Q6BRG6"/>
<dbReference type="FunCoup" id="Q6BRG6">
    <property type="interactions" value="1130"/>
</dbReference>
<dbReference type="STRING" id="284592.Q6BRG6"/>
<dbReference type="GeneID" id="2901418"/>
<dbReference type="KEGG" id="dha:DEHA2D16522g"/>
<dbReference type="VEuPathDB" id="FungiDB:DEHA2D16522g"/>
<dbReference type="eggNOG" id="KOG0650">
    <property type="taxonomic scope" value="Eukaryota"/>
</dbReference>
<dbReference type="HOGENOM" id="CLU_011390_0_1_1"/>
<dbReference type="InParanoid" id="Q6BRG6"/>
<dbReference type="OMA" id="MRPAKGE"/>
<dbReference type="OrthoDB" id="5571054at2759"/>
<dbReference type="Proteomes" id="UP000000599">
    <property type="component" value="Chromosome D"/>
</dbReference>
<dbReference type="GO" id="GO:0005654">
    <property type="term" value="C:nucleoplasm"/>
    <property type="evidence" value="ECO:0007669"/>
    <property type="project" value="UniProtKB-SubCell"/>
</dbReference>
<dbReference type="GO" id="GO:0070545">
    <property type="term" value="C:PeBoW complex"/>
    <property type="evidence" value="ECO:0007669"/>
    <property type="project" value="EnsemblFungi"/>
</dbReference>
<dbReference type="GO" id="GO:0030687">
    <property type="term" value="C:preribosome, large subunit precursor"/>
    <property type="evidence" value="ECO:0007669"/>
    <property type="project" value="UniProtKB-UniRule"/>
</dbReference>
<dbReference type="GO" id="GO:0070180">
    <property type="term" value="F:large ribosomal subunit rRNA binding"/>
    <property type="evidence" value="ECO:0007669"/>
    <property type="project" value="EnsemblFungi"/>
</dbReference>
<dbReference type="GO" id="GO:0043021">
    <property type="term" value="F:ribonucleoprotein complex binding"/>
    <property type="evidence" value="ECO:0007669"/>
    <property type="project" value="UniProtKB-UniRule"/>
</dbReference>
<dbReference type="GO" id="GO:0000466">
    <property type="term" value="P:maturation of 5.8S rRNA from tricistronic rRNA transcript (SSU-rRNA, 5.8S rRNA, LSU-rRNA)"/>
    <property type="evidence" value="ECO:0007669"/>
    <property type="project" value="UniProtKB-UniRule"/>
</dbReference>
<dbReference type="GO" id="GO:0000463">
    <property type="term" value="P:maturation of LSU-rRNA from tricistronic rRNA transcript (SSU-rRNA, 5.8S rRNA, LSU-rRNA)"/>
    <property type="evidence" value="ECO:0007669"/>
    <property type="project" value="UniProtKB-UniRule"/>
</dbReference>
<dbReference type="FunFam" id="2.130.10.10:FF:000061">
    <property type="entry name" value="Ribosome biogenesis protein BOP1 homolog"/>
    <property type="match status" value="1"/>
</dbReference>
<dbReference type="Gene3D" id="2.130.10.10">
    <property type="entry name" value="YVTN repeat-like/Quinoprotein amine dehydrogenase"/>
    <property type="match status" value="1"/>
</dbReference>
<dbReference type="HAMAP" id="MF_03027">
    <property type="entry name" value="BOP1"/>
    <property type="match status" value="1"/>
</dbReference>
<dbReference type="InterPro" id="IPR028598">
    <property type="entry name" value="BOP1/Erb1"/>
</dbReference>
<dbReference type="InterPro" id="IPR012953">
    <property type="entry name" value="BOP1_N_dom"/>
</dbReference>
<dbReference type="InterPro" id="IPR015943">
    <property type="entry name" value="WD40/YVTN_repeat-like_dom_sf"/>
</dbReference>
<dbReference type="InterPro" id="IPR019775">
    <property type="entry name" value="WD40_repeat_CS"/>
</dbReference>
<dbReference type="InterPro" id="IPR036322">
    <property type="entry name" value="WD40_repeat_dom_sf"/>
</dbReference>
<dbReference type="InterPro" id="IPR001680">
    <property type="entry name" value="WD40_rpt"/>
</dbReference>
<dbReference type="PANTHER" id="PTHR17605:SF0">
    <property type="entry name" value="RIBOSOME BIOGENESIS PROTEIN BOP1"/>
    <property type="match status" value="1"/>
</dbReference>
<dbReference type="PANTHER" id="PTHR17605">
    <property type="entry name" value="RIBOSOME BIOGENESIS PROTEIN BOP1 BLOCK OF PROLIFERATION 1 PROTEIN"/>
    <property type="match status" value="1"/>
</dbReference>
<dbReference type="Pfam" id="PF08145">
    <property type="entry name" value="BOP1NT"/>
    <property type="match status" value="1"/>
</dbReference>
<dbReference type="Pfam" id="PF00400">
    <property type="entry name" value="WD40"/>
    <property type="match status" value="3"/>
</dbReference>
<dbReference type="SMART" id="SM01035">
    <property type="entry name" value="BOP1NT"/>
    <property type="match status" value="1"/>
</dbReference>
<dbReference type="SMART" id="SM00320">
    <property type="entry name" value="WD40"/>
    <property type="match status" value="6"/>
</dbReference>
<dbReference type="SUPFAM" id="SSF50978">
    <property type="entry name" value="WD40 repeat-like"/>
    <property type="match status" value="1"/>
</dbReference>
<dbReference type="PROSITE" id="PS00678">
    <property type="entry name" value="WD_REPEATS_1"/>
    <property type="match status" value="1"/>
</dbReference>
<dbReference type="PROSITE" id="PS50082">
    <property type="entry name" value="WD_REPEATS_2"/>
    <property type="match status" value="2"/>
</dbReference>
<dbReference type="PROSITE" id="PS50294">
    <property type="entry name" value="WD_REPEATS_REGION"/>
    <property type="match status" value="2"/>
</dbReference>
<organism>
    <name type="scientific">Debaryomyces hansenii (strain ATCC 36239 / CBS 767 / BCRC 21394 / JCM 1990 / NBRC 0083 / IGC 2968)</name>
    <name type="common">Yeast</name>
    <name type="synonym">Torulaspora hansenii</name>
    <dbReference type="NCBI Taxonomy" id="284592"/>
    <lineage>
        <taxon>Eukaryota</taxon>
        <taxon>Fungi</taxon>
        <taxon>Dikarya</taxon>
        <taxon>Ascomycota</taxon>
        <taxon>Saccharomycotina</taxon>
        <taxon>Pichiomycetes</taxon>
        <taxon>Debaryomycetaceae</taxon>
        <taxon>Debaryomyces</taxon>
    </lineage>
</organism>
<evidence type="ECO:0000250" key="1"/>
<evidence type="ECO:0000255" key="2">
    <source>
        <dbReference type="HAMAP-Rule" id="MF_03027"/>
    </source>
</evidence>
<evidence type="ECO:0000256" key="3">
    <source>
        <dbReference type="SAM" id="MobiDB-lite"/>
    </source>
</evidence>
<gene>
    <name evidence="2" type="primary">ERB1</name>
    <name type="ordered locus">DEHA2D16522g</name>
</gene>